<keyword id="KW-0150">Chloroplast</keyword>
<keyword id="KW-0472">Membrane</keyword>
<keyword id="KW-0602">Photosynthesis</keyword>
<keyword id="KW-0604">Photosystem II</keyword>
<keyword id="KW-0934">Plastid</keyword>
<keyword id="KW-0674">Reaction center</keyword>
<keyword id="KW-0793">Thylakoid</keyword>
<keyword id="KW-0812">Transmembrane</keyword>
<keyword id="KW-1133">Transmembrane helix</keyword>
<organism>
    <name type="scientific">Carica papaya</name>
    <name type="common">Papaya</name>
    <dbReference type="NCBI Taxonomy" id="3649"/>
    <lineage>
        <taxon>Eukaryota</taxon>
        <taxon>Viridiplantae</taxon>
        <taxon>Streptophyta</taxon>
        <taxon>Embryophyta</taxon>
        <taxon>Tracheophyta</taxon>
        <taxon>Spermatophyta</taxon>
        <taxon>Magnoliopsida</taxon>
        <taxon>eudicotyledons</taxon>
        <taxon>Gunneridae</taxon>
        <taxon>Pentapetalae</taxon>
        <taxon>rosids</taxon>
        <taxon>malvids</taxon>
        <taxon>Brassicales</taxon>
        <taxon>Caricaceae</taxon>
        <taxon>Carica</taxon>
    </lineage>
</organism>
<feature type="chain" id="PRO_0000353252" description="Photosystem II reaction center protein L">
    <location>
        <begin position="1"/>
        <end position="38"/>
    </location>
</feature>
<feature type="transmembrane region" description="Helical" evidence="1">
    <location>
        <begin position="17"/>
        <end position="37"/>
    </location>
</feature>
<protein>
    <recommendedName>
        <fullName evidence="1">Photosystem II reaction center protein L</fullName>
        <shortName evidence="1">PSII-L</shortName>
    </recommendedName>
</protein>
<comment type="function">
    <text evidence="1">One of the components of the core complex of photosystem II (PSII). PSII is a light-driven water:plastoquinone oxidoreductase that uses light energy to abstract electrons from H(2)O, generating O(2) and a proton gradient subsequently used for ATP formation. It consists of a core antenna complex that captures photons, and an electron transfer chain that converts photonic excitation into a charge separation. This subunit is found at the monomer-monomer interface and is required for correct PSII assembly and/or dimerization.</text>
</comment>
<comment type="subunit">
    <text evidence="1">PSII is composed of 1 copy each of membrane proteins PsbA, PsbB, PsbC, PsbD, PsbE, PsbF, PsbH, PsbI, PsbJ, PsbK, PsbL, PsbM, PsbT, PsbX, PsbY, PsbZ, Psb30/Ycf12, at least 3 peripheral proteins of the oxygen-evolving complex and a large number of cofactors. It forms dimeric complexes.</text>
</comment>
<comment type="subcellular location">
    <subcellularLocation>
        <location evidence="1">Plastid</location>
        <location evidence="1">Chloroplast thylakoid membrane</location>
        <topology evidence="1">Single-pass membrane protein</topology>
    </subcellularLocation>
</comment>
<comment type="similarity">
    <text evidence="1">Belongs to the PsbL family.</text>
</comment>
<sequence>MTQSNPNEQNVELNRTSLYWGLLLIFVLAVLFSNYFFN</sequence>
<gene>
    <name evidence="1" type="primary">psbL</name>
</gene>
<proteinExistence type="inferred from homology"/>
<geneLocation type="chloroplast"/>
<accession>B1A950</accession>
<dbReference type="EMBL" id="EU431223">
    <property type="protein sequence ID" value="ABY86797.1"/>
    <property type="molecule type" value="Genomic_DNA"/>
</dbReference>
<dbReference type="RefSeq" id="YP_001671698.1">
    <property type="nucleotide sequence ID" value="NC_010323.1"/>
</dbReference>
<dbReference type="SMR" id="B1A950"/>
<dbReference type="GeneID" id="5878431"/>
<dbReference type="KEGG" id="cpap:5878431"/>
<dbReference type="OrthoDB" id="99at2759"/>
<dbReference type="GO" id="GO:0009535">
    <property type="term" value="C:chloroplast thylakoid membrane"/>
    <property type="evidence" value="ECO:0007669"/>
    <property type="project" value="UniProtKB-SubCell"/>
</dbReference>
<dbReference type="GO" id="GO:0009539">
    <property type="term" value="C:photosystem II reaction center"/>
    <property type="evidence" value="ECO:0007669"/>
    <property type="project" value="InterPro"/>
</dbReference>
<dbReference type="GO" id="GO:0015979">
    <property type="term" value="P:photosynthesis"/>
    <property type="evidence" value="ECO:0007669"/>
    <property type="project" value="UniProtKB-UniRule"/>
</dbReference>
<dbReference type="HAMAP" id="MF_01317">
    <property type="entry name" value="PSII_PsbL"/>
    <property type="match status" value="1"/>
</dbReference>
<dbReference type="InterPro" id="IPR003372">
    <property type="entry name" value="PSII_PsbL"/>
</dbReference>
<dbReference type="InterPro" id="IPR037266">
    <property type="entry name" value="PSII_PsbL_sf"/>
</dbReference>
<dbReference type="NCBIfam" id="NF001972">
    <property type="entry name" value="PRK00753.1"/>
    <property type="match status" value="1"/>
</dbReference>
<dbReference type="Pfam" id="PF02419">
    <property type="entry name" value="PsbL"/>
    <property type="match status" value="1"/>
</dbReference>
<dbReference type="SUPFAM" id="SSF161017">
    <property type="entry name" value="Photosystem II reaction center protein L, PsbL"/>
    <property type="match status" value="1"/>
</dbReference>
<evidence type="ECO:0000255" key="1">
    <source>
        <dbReference type="HAMAP-Rule" id="MF_01317"/>
    </source>
</evidence>
<reference key="1">
    <citation type="journal article" date="2008" name="Nature">
        <title>The draft genome of the transgenic tropical fruit tree papaya (Carica papaya Linnaeus).</title>
        <authorList>
            <person name="Ming R."/>
            <person name="Hou S."/>
            <person name="Feng Y."/>
            <person name="Yu Q."/>
            <person name="Dionne-Laporte A."/>
            <person name="Saw J.H."/>
            <person name="Senin P."/>
            <person name="Wang W."/>
            <person name="Ly B.V."/>
            <person name="Lewis K.L."/>
            <person name="Salzberg S.L."/>
            <person name="Feng L."/>
            <person name="Jones M.R."/>
            <person name="Skelton R.L."/>
            <person name="Murray J.E."/>
            <person name="Chen C."/>
            <person name="Qian W."/>
            <person name="Shen J."/>
            <person name="Du P."/>
            <person name="Eustice M."/>
            <person name="Tong E."/>
            <person name="Tang H."/>
            <person name="Lyons E."/>
            <person name="Paull R.E."/>
            <person name="Michael T.P."/>
            <person name="Wall K."/>
            <person name="Rice D.W."/>
            <person name="Albert H."/>
            <person name="Wang M.L."/>
            <person name="Zhu Y.J."/>
            <person name="Schatz M."/>
            <person name="Nagarajan N."/>
            <person name="Acob R.A."/>
            <person name="Guan P."/>
            <person name="Blas A."/>
            <person name="Wai C.M."/>
            <person name="Ackerman C.M."/>
            <person name="Ren Y."/>
            <person name="Liu C."/>
            <person name="Wang J."/>
            <person name="Wang J."/>
            <person name="Na J.K."/>
            <person name="Shakirov E.V."/>
            <person name="Haas B."/>
            <person name="Thimmapuram J."/>
            <person name="Nelson D."/>
            <person name="Wang X."/>
            <person name="Bowers J.E."/>
            <person name="Gschwend A.R."/>
            <person name="Delcher A.L."/>
            <person name="Singh R."/>
            <person name="Suzuki J.Y."/>
            <person name="Tripathi S."/>
            <person name="Neupane K."/>
            <person name="Wei H."/>
            <person name="Irikura B."/>
            <person name="Paidi M."/>
            <person name="Jiang N."/>
            <person name="Zhang W."/>
            <person name="Presting G."/>
            <person name="Windsor A."/>
            <person name="Navajas-Perez R."/>
            <person name="Torres M.J."/>
            <person name="Feltus F.A."/>
            <person name="Porter B."/>
            <person name="Li Y."/>
            <person name="Burroughs A.M."/>
            <person name="Luo M.C."/>
            <person name="Liu L."/>
            <person name="Christopher D.A."/>
            <person name="Mount S.M."/>
            <person name="Moore P.H."/>
            <person name="Sugimura T."/>
            <person name="Jiang J."/>
            <person name="Schuler M.A."/>
            <person name="Friedman V."/>
            <person name="Mitchell-Olds T."/>
            <person name="Shippen D.E."/>
            <person name="dePamphilis C.W."/>
            <person name="Palmer J.D."/>
            <person name="Freeling M."/>
            <person name="Paterson A.H."/>
            <person name="Gonsalves D."/>
            <person name="Wang L."/>
            <person name="Alam M."/>
        </authorList>
    </citation>
    <scope>NUCLEOTIDE SEQUENCE [LARGE SCALE GENOMIC DNA]</scope>
    <source>
        <strain>cv. SunUp</strain>
    </source>
</reference>
<name>PSBL_CARPA</name>